<reference evidence="5" key="1">
    <citation type="journal article" date="1994" name="Am. J. Physiol.">
        <title>Molecular characterization of ROSIT, a renal osmotic stress-induced Na(+)-Cl(-)-organic solute cotransporter.</title>
        <authorList>
            <person name="Wasserman J.C."/>
            <person name="Delpire E."/>
            <person name="Tonidandel W."/>
            <person name="Kojima R."/>
            <person name="Gullans S.R."/>
        </authorList>
    </citation>
    <scope>NUCLEOTIDE SEQUENCE [MRNA]</scope>
    <scope>TISSUE SPECIFICITY</scope>
    <scope>INDUCTION</scope>
    <source>
        <strain evidence="4">Sprague-Dawley</strain>
        <tissue evidence="4">Kidney cortex</tissue>
    </source>
</reference>
<sequence>MAQASGMDPLVDIEDERPKWDNKLQYLLSCIGFAVGLGNIWRFPYLCHTHGGGAFLIPYFIALVFEGIPLFYIELAIGQRLRRGSIGVWKTISPYLGGVGLGCFSVSFLVSLYYNTILLWVLWFFLNSFQHPLPWSTCPLDLNRTGFVQECQSSGTVSYFWYRQTLNITSDISNTGTIQWKLFLCLVACWTTVYLCVIRGIESTGKVIYFTALFPYLVLTIFLIRGLTLPGATEGLTYLFTPNMKILQNSRVWLDAATQIFFSLSLAFGGHIAFASYNQPRNNCEKDAVTIALVNSMTSLYASITIFSIMGFKASNDYGRCLDRNILSLINEFDFPELSISRDEYPSVLMYLNATQPERVARLPLKTCHLEDFLDKSASGPGLAFIVFTEAVLHMPGASVWSVLFFGMLFTLGLSSMFGNMEGVITPLFDMGILPKGVPKETMTGVVCFICFLSAICFTLQSGSYWLEIFDSFAASLNLIIFAFMEVVGVIHVYGIKRFCDDIEWMTGRRPSLYWQVTWRVVSPMLLFGIFLSYIVLLAQSSPSYKAWNPQYEHFPSREEKLYPGWVQVTCVLLSFLPSLWVPGIALAQLLFQYRQRWKNTHLESALKPQESRGC</sequence>
<protein>
    <recommendedName>
        <fullName evidence="1">Sodium-dependent neutral amino acid transporter B(0)AT3</fullName>
    </recommendedName>
    <alternativeName>
        <fullName>Renal osmotic stress-induced Na-Cl organic solute cotransporter</fullName>
        <shortName>ROSIT</shortName>
    </alternativeName>
    <alternativeName>
        <fullName>Sodium- and chloride-dependent transporter XTRP2</fullName>
    </alternativeName>
    <alternativeName>
        <fullName>Solute carrier family 6 member 18</fullName>
    </alternativeName>
    <alternativeName>
        <fullName>System B(0) neutral amino acid transporter AT3</fullName>
    </alternativeName>
</protein>
<comment type="function">
    <text evidence="1">Symporter that transports one amino acid molecule together with two sodium and one chloride ions in kidneys and plays a role in the neutral amino acids reabsorption. Preferentially transports neutral amino acids such as L-glycine and L-alanine but also other neutral amino acids. Required CLTRN for cell surface expression and for its amino acid transporter activity. The transport mechanism is pH-independent.</text>
</comment>
<comment type="catalytic activity">
    <reaction evidence="1">
        <text>L-alanine(out) + chloride(out) + 2 Na(+)(out) = L-alanine(in) + chloride(in) + 2 Na(+)(in)</text>
        <dbReference type="Rhea" id="RHEA:71311"/>
        <dbReference type="ChEBI" id="CHEBI:17996"/>
        <dbReference type="ChEBI" id="CHEBI:29101"/>
        <dbReference type="ChEBI" id="CHEBI:57972"/>
    </reaction>
</comment>
<comment type="catalytic activity">
    <reaction evidence="1">
        <text>glycine(out) + chloride(out) + 2 Na(+)(out) = glycine(in) + chloride(in) + 2 Na(+)(in)</text>
        <dbReference type="Rhea" id="RHEA:70691"/>
        <dbReference type="ChEBI" id="CHEBI:17996"/>
        <dbReference type="ChEBI" id="CHEBI:29101"/>
        <dbReference type="ChEBI" id="CHEBI:57305"/>
    </reaction>
</comment>
<comment type="catalytic activity">
    <reaction evidence="1">
        <text>L-methionine(out) + chloride(out) + 2 Na(+)(out) = L-methionine(in) + chloride(in) + 2 Na(+)(in)</text>
        <dbReference type="Rhea" id="RHEA:71303"/>
        <dbReference type="ChEBI" id="CHEBI:17996"/>
        <dbReference type="ChEBI" id="CHEBI:29101"/>
        <dbReference type="ChEBI" id="CHEBI:57844"/>
    </reaction>
</comment>
<comment type="catalytic activity">
    <reaction evidence="1">
        <text>L-valine(out) + chloride(out) + 2 Na(+)(out) = L-valine(in) + chloride(in) + 2 Na(+)(in)</text>
        <dbReference type="Rhea" id="RHEA:71307"/>
        <dbReference type="ChEBI" id="CHEBI:17996"/>
        <dbReference type="ChEBI" id="CHEBI:29101"/>
        <dbReference type="ChEBI" id="CHEBI:57762"/>
    </reaction>
</comment>
<comment type="catalytic activity">
    <reaction evidence="1">
        <text>L-isoleucine(out) + chloride(out) + 2 Na(+)(out) = L-isoleucine(in) + chloride(in) + 2 Na(+)(in)</text>
        <dbReference type="Rhea" id="RHEA:71299"/>
        <dbReference type="ChEBI" id="CHEBI:17996"/>
        <dbReference type="ChEBI" id="CHEBI:29101"/>
        <dbReference type="ChEBI" id="CHEBI:58045"/>
    </reaction>
</comment>
<comment type="catalytic activity">
    <reaction evidence="1">
        <text>L-serine(out) + chloride(out) + 2 Na(+)(out) = L-serine(in) + chloride(in) + 2 Na(+)(in)</text>
        <dbReference type="Rhea" id="RHEA:71315"/>
        <dbReference type="ChEBI" id="CHEBI:17996"/>
        <dbReference type="ChEBI" id="CHEBI:29101"/>
        <dbReference type="ChEBI" id="CHEBI:33384"/>
    </reaction>
</comment>
<comment type="catalytic activity">
    <reaction evidence="1">
        <text>L-leucine(out) + chloride(out) + 2 Na(+)(out) = L-leucine(in) + chloride(in) + 2 Na(+)(in)</text>
        <dbReference type="Rhea" id="RHEA:71279"/>
        <dbReference type="ChEBI" id="CHEBI:17996"/>
        <dbReference type="ChEBI" id="CHEBI:29101"/>
        <dbReference type="ChEBI" id="CHEBI:57427"/>
    </reaction>
</comment>
<comment type="subunit">
    <text evidence="1">Interacts with CLTRN; this interaction regulates the trafficking of SLC6A18 to the cell membrane and its activity.</text>
</comment>
<comment type="subcellular location">
    <subcellularLocation>
        <location evidence="1">Apical cell membrane</location>
        <topology evidence="2">Multi-pass membrane protein</topology>
    </subcellularLocation>
    <subcellularLocation>
        <location evidence="1">Cell membrane</location>
        <topology evidence="2">Multi-pass membrane protein</topology>
    </subcellularLocation>
    <text evidence="1">In kidneys localizes to the apical membrane in distal segments of the proximal tubule. Cell membrane expression is CLTRN-dependent.</text>
</comment>
<comment type="tissue specificity">
    <text evidence="4">Kidney-specific expression.</text>
</comment>
<comment type="induction">
    <text evidence="4">By renal osmotic stress.</text>
</comment>
<comment type="similarity">
    <text evidence="5">Belongs to the sodium:neurotransmitter symporter (SNF) (TC 2.A.22) family. SLC6A18 subfamily.</text>
</comment>
<keyword id="KW-0029">Amino-acid transport</keyword>
<keyword id="KW-1003">Cell membrane</keyword>
<keyword id="KW-0325">Glycoprotein</keyword>
<keyword id="KW-0472">Membrane</keyword>
<keyword id="KW-0532">Neurotransmitter transport</keyword>
<keyword id="KW-1185">Reference proteome</keyword>
<keyword id="KW-0769">Symport</keyword>
<keyword id="KW-0812">Transmembrane</keyword>
<keyword id="KW-1133">Transmembrane helix</keyword>
<keyword id="KW-0813">Transport</keyword>
<organism>
    <name type="scientific">Rattus norvegicus</name>
    <name type="common">Rat</name>
    <dbReference type="NCBI Taxonomy" id="10116"/>
    <lineage>
        <taxon>Eukaryota</taxon>
        <taxon>Metazoa</taxon>
        <taxon>Chordata</taxon>
        <taxon>Craniata</taxon>
        <taxon>Vertebrata</taxon>
        <taxon>Euteleostomi</taxon>
        <taxon>Mammalia</taxon>
        <taxon>Eutheria</taxon>
        <taxon>Euarchontoglires</taxon>
        <taxon>Glires</taxon>
        <taxon>Rodentia</taxon>
        <taxon>Myomorpha</taxon>
        <taxon>Muroidea</taxon>
        <taxon>Muridae</taxon>
        <taxon>Murinae</taxon>
        <taxon>Rattus</taxon>
    </lineage>
</organism>
<accession>Q62687</accession>
<evidence type="ECO:0000250" key="1">
    <source>
        <dbReference type="UniProtKB" id="O88576"/>
    </source>
</evidence>
<evidence type="ECO:0000255" key="2"/>
<evidence type="ECO:0000255" key="3">
    <source>
        <dbReference type="PROSITE-ProRule" id="PRU00498"/>
    </source>
</evidence>
<evidence type="ECO:0000269" key="4">
    <source>
    </source>
</evidence>
<evidence type="ECO:0000305" key="5"/>
<evidence type="ECO:0000312" key="6">
    <source>
        <dbReference type="RGD" id="69352"/>
    </source>
</evidence>
<gene>
    <name evidence="6" type="primary">Slc6a18</name>
    <name type="synonym">B0at3</name>
    <name type="synonym">Xtrp2</name>
</gene>
<name>S6A18_RAT</name>
<proteinExistence type="evidence at transcript level"/>
<feature type="chain" id="PRO_0000214808" description="Sodium-dependent neutral amino acid transporter B(0)AT3">
    <location>
        <begin position="1"/>
        <end position="615"/>
    </location>
</feature>
<feature type="topological domain" description="Cytoplasmic" evidence="2">
    <location>
        <begin position="1"/>
        <end position="26"/>
    </location>
</feature>
<feature type="transmembrane region" description="Helical; Name=1" evidence="2">
    <location>
        <begin position="27"/>
        <end position="47"/>
    </location>
</feature>
<feature type="topological domain" description="Extracellular" evidence="2">
    <location>
        <begin position="48"/>
        <end position="52"/>
    </location>
</feature>
<feature type="transmembrane region" description="Helical; Name=2" evidence="2">
    <location>
        <begin position="53"/>
        <end position="73"/>
    </location>
</feature>
<feature type="topological domain" description="Cytoplasmic" evidence="2">
    <location>
        <begin position="74"/>
        <end position="105"/>
    </location>
</feature>
<feature type="transmembrane region" description="Helical; Name=3" evidence="2">
    <location>
        <begin position="106"/>
        <end position="126"/>
    </location>
</feature>
<feature type="topological domain" description="Extracellular" evidence="2">
    <location>
        <begin position="127"/>
        <end position="177"/>
    </location>
</feature>
<feature type="transmembrane region" description="Helical; Name=4" evidence="2">
    <location>
        <begin position="178"/>
        <end position="198"/>
    </location>
</feature>
<feature type="topological domain" description="Cytoplasmic" evidence="2">
    <location>
        <begin position="199"/>
        <end position="206"/>
    </location>
</feature>
<feature type="transmembrane region" description="Helical; Name=5" evidence="2">
    <location>
        <begin position="207"/>
        <end position="227"/>
    </location>
</feature>
<feature type="topological domain" description="Extracellular" evidence="2">
    <location>
        <begin position="228"/>
        <end position="255"/>
    </location>
</feature>
<feature type="transmembrane region" description="Helical; Name=6" evidence="2">
    <location>
        <begin position="256"/>
        <end position="276"/>
    </location>
</feature>
<feature type="topological domain" description="Cytoplasmic" evidence="2">
    <location>
        <begin position="277"/>
        <end position="290"/>
    </location>
</feature>
<feature type="transmembrane region" description="Helical; Name=7" evidence="2">
    <location>
        <begin position="291"/>
        <end position="311"/>
    </location>
</feature>
<feature type="topological domain" description="Extracellular" evidence="2">
    <location>
        <begin position="312"/>
        <end position="397"/>
    </location>
</feature>
<feature type="transmembrane region" description="Helical; Name=8" evidence="2">
    <location>
        <begin position="398"/>
        <end position="418"/>
    </location>
</feature>
<feature type="topological domain" description="Cytoplasmic" evidence="2">
    <location>
        <begin position="419"/>
        <end position="442"/>
    </location>
</feature>
<feature type="transmembrane region" description="Helical; Name=9" evidence="2">
    <location>
        <begin position="443"/>
        <end position="463"/>
    </location>
</feature>
<feature type="topological domain" description="Extracellular" evidence="2">
    <location>
        <begin position="464"/>
        <end position="472"/>
    </location>
</feature>
<feature type="transmembrane region" description="Helical; Name=10" evidence="2">
    <location>
        <begin position="473"/>
        <end position="493"/>
    </location>
</feature>
<feature type="topological domain" description="Cytoplasmic" evidence="2">
    <location>
        <begin position="494"/>
        <end position="520"/>
    </location>
</feature>
<feature type="transmembrane region" description="Helical; Name=11" evidence="2">
    <location>
        <begin position="521"/>
        <end position="541"/>
    </location>
</feature>
<feature type="topological domain" description="Extracellular" evidence="2">
    <location>
        <begin position="542"/>
        <end position="571"/>
    </location>
</feature>
<feature type="transmembrane region" description="Helical; Name=12" evidence="2">
    <location>
        <begin position="572"/>
        <end position="592"/>
    </location>
</feature>
<feature type="topological domain" description="Cytoplasmic" evidence="2">
    <location>
        <begin position="593"/>
        <end position="615"/>
    </location>
</feature>
<feature type="glycosylation site" description="N-linked (GlcNAc...) asparagine" evidence="3">
    <location>
        <position position="143"/>
    </location>
</feature>
<feature type="glycosylation site" description="N-linked (GlcNAc...) asparagine" evidence="3">
    <location>
        <position position="167"/>
    </location>
</feature>
<feature type="glycosylation site" description="N-linked (GlcNAc...) asparagine" evidence="3">
    <location>
        <position position="353"/>
    </location>
</feature>
<dbReference type="EMBL" id="U12973">
    <property type="protein sequence ID" value="AAC13771.1"/>
    <property type="molecule type" value="mRNA"/>
</dbReference>
<dbReference type="RefSeq" id="NP_058859.1">
    <property type="nucleotide sequence ID" value="NM_017163.1"/>
</dbReference>
<dbReference type="SMR" id="Q62687"/>
<dbReference type="FunCoup" id="Q62687">
    <property type="interactions" value="1"/>
</dbReference>
<dbReference type="STRING" id="10116.ENSRNOP00000022346"/>
<dbReference type="GlyCosmos" id="Q62687">
    <property type="glycosylation" value="3 sites, No reported glycans"/>
</dbReference>
<dbReference type="GlyGen" id="Q62687">
    <property type="glycosylation" value="3 sites"/>
</dbReference>
<dbReference type="iPTMnet" id="Q62687"/>
<dbReference type="PhosphoSitePlus" id="Q62687"/>
<dbReference type="PaxDb" id="10116-ENSRNOP00000022346"/>
<dbReference type="GeneID" id="29323"/>
<dbReference type="KEGG" id="rno:29323"/>
<dbReference type="UCSC" id="RGD:69352">
    <property type="organism name" value="rat"/>
</dbReference>
<dbReference type="AGR" id="RGD:69352"/>
<dbReference type="CTD" id="348932"/>
<dbReference type="RGD" id="69352">
    <property type="gene designation" value="Slc6a18"/>
</dbReference>
<dbReference type="eggNOG" id="KOG3659">
    <property type="taxonomic scope" value="Eukaryota"/>
</dbReference>
<dbReference type="InParanoid" id="Q62687"/>
<dbReference type="PhylomeDB" id="Q62687"/>
<dbReference type="Reactome" id="R-RNO-352230">
    <property type="pathway name" value="Amino acid transport across the plasma membrane"/>
</dbReference>
<dbReference type="Reactome" id="R-RNO-442660">
    <property type="pathway name" value="Na+/Cl- dependent neurotransmitter transporters"/>
</dbReference>
<dbReference type="PRO" id="PR:Q62687"/>
<dbReference type="Proteomes" id="UP000002494">
    <property type="component" value="Unplaced"/>
</dbReference>
<dbReference type="GO" id="GO:0016324">
    <property type="term" value="C:apical plasma membrane"/>
    <property type="evidence" value="ECO:0000250"/>
    <property type="project" value="UniProtKB"/>
</dbReference>
<dbReference type="GO" id="GO:0031526">
    <property type="term" value="C:brush border membrane"/>
    <property type="evidence" value="ECO:0000266"/>
    <property type="project" value="RGD"/>
</dbReference>
<dbReference type="GO" id="GO:0005886">
    <property type="term" value="C:plasma membrane"/>
    <property type="evidence" value="ECO:0000250"/>
    <property type="project" value="UniProtKB"/>
</dbReference>
<dbReference type="GO" id="GO:0015175">
    <property type="term" value="F:neutral L-amino acid transmembrane transporter activity"/>
    <property type="evidence" value="ECO:0000266"/>
    <property type="project" value="RGD"/>
</dbReference>
<dbReference type="GO" id="GO:0140931">
    <property type="term" value="F:neutral L-amino acid:sodium:chloride symporter activity"/>
    <property type="evidence" value="ECO:0000250"/>
    <property type="project" value="UniProtKB"/>
</dbReference>
<dbReference type="GO" id="GO:0003333">
    <property type="term" value="P:amino acid transmembrane transport"/>
    <property type="evidence" value="ECO:0000266"/>
    <property type="project" value="RGD"/>
</dbReference>
<dbReference type="GO" id="GO:0006865">
    <property type="term" value="P:amino acid transport"/>
    <property type="evidence" value="ECO:0000318"/>
    <property type="project" value="GO_Central"/>
</dbReference>
<dbReference type="GO" id="GO:0006972">
    <property type="term" value="P:hyperosmotic response"/>
    <property type="evidence" value="ECO:0000270"/>
    <property type="project" value="RGD"/>
</dbReference>
<dbReference type="GO" id="GO:0006836">
    <property type="term" value="P:neurotransmitter transport"/>
    <property type="evidence" value="ECO:0007669"/>
    <property type="project" value="UniProtKB-KW"/>
</dbReference>
<dbReference type="GO" id="GO:0015804">
    <property type="term" value="P:neutral amino acid transport"/>
    <property type="evidence" value="ECO:0000250"/>
    <property type="project" value="UniProtKB"/>
</dbReference>
<dbReference type="GO" id="GO:1990297">
    <property type="term" value="P:renal amino acid absorption"/>
    <property type="evidence" value="ECO:0000250"/>
    <property type="project" value="UniProtKB"/>
</dbReference>
<dbReference type="GO" id="GO:0035725">
    <property type="term" value="P:sodium ion transmembrane transport"/>
    <property type="evidence" value="ECO:0000318"/>
    <property type="project" value="GO_Central"/>
</dbReference>
<dbReference type="CDD" id="cd11517">
    <property type="entry name" value="SLC6sbd_B0AT3"/>
    <property type="match status" value="1"/>
</dbReference>
<dbReference type="InterPro" id="IPR042701">
    <property type="entry name" value="B0AT3_SLC6sbd"/>
</dbReference>
<dbReference type="InterPro" id="IPR000175">
    <property type="entry name" value="Na/ntran_symport"/>
</dbReference>
<dbReference type="InterPro" id="IPR002438">
    <property type="entry name" value="Neutral_aa_SLC6"/>
</dbReference>
<dbReference type="InterPro" id="IPR037272">
    <property type="entry name" value="SNS_sf"/>
</dbReference>
<dbReference type="PANTHER" id="PTHR11616:SF109">
    <property type="entry name" value="INACTIVE SODIUM-DEPENDENT NEUTRAL AMINO ACID TRANSPORTER B(0)AT3"/>
    <property type="match status" value="1"/>
</dbReference>
<dbReference type="PANTHER" id="PTHR11616">
    <property type="entry name" value="SODIUM/CHLORIDE DEPENDENT TRANSPORTER"/>
    <property type="match status" value="1"/>
</dbReference>
<dbReference type="Pfam" id="PF00209">
    <property type="entry name" value="SNF"/>
    <property type="match status" value="1"/>
</dbReference>
<dbReference type="PRINTS" id="PR00176">
    <property type="entry name" value="NANEUSMPORT"/>
</dbReference>
<dbReference type="PRINTS" id="PR01206">
    <property type="entry name" value="ORPHTRNSPORT"/>
</dbReference>
<dbReference type="SUPFAM" id="SSF161070">
    <property type="entry name" value="SNF-like"/>
    <property type="match status" value="1"/>
</dbReference>
<dbReference type="PROSITE" id="PS00610">
    <property type="entry name" value="NA_NEUROTRAN_SYMP_1"/>
    <property type="match status" value="1"/>
</dbReference>
<dbReference type="PROSITE" id="PS00754">
    <property type="entry name" value="NA_NEUROTRAN_SYMP_2"/>
    <property type="match status" value="1"/>
</dbReference>
<dbReference type="PROSITE" id="PS50267">
    <property type="entry name" value="NA_NEUROTRAN_SYMP_3"/>
    <property type="match status" value="1"/>
</dbReference>